<comment type="function">
    <text evidence="1">Required for rescue of stalled ribosomes mediated by trans-translation. Binds to transfer-messenger RNA (tmRNA), required for stable association of tmRNA with ribosomes. tmRNA and SmpB together mimic tRNA shape, replacing the anticodon stem-loop with SmpB. tmRNA is encoded by the ssrA gene; the 2 termini fold to resemble tRNA(Ala) and it encodes a 'tag peptide', a short internal open reading frame. During trans-translation Ala-aminoacylated tmRNA acts like a tRNA, entering the A-site of stalled ribosomes, displacing the stalled mRNA. The ribosome then switches to translate the ORF on the tmRNA; the nascent peptide is terminated with the 'tag peptide' encoded by the tmRNA and targeted for degradation. The ribosome is freed to recommence translation, which seems to be the essential function of trans-translation.</text>
</comment>
<comment type="subcellular location">
    <subcellularLocation>
        <location evidence="1">Cytoplasm</location>
    </subcellularLocation>
    <text evidence="1">The tmRNA-SmpB complex associates with stalled 70S ribosomes.</text>
</comment>
<comment type="similarity">
    <text evidence="1">Belongs to the SmpB family.</text>
</comment>
<feature type="chain" id="PRO_0000278061" description="SsrA-binding protein">
    <location>
        <begin position="1"/>
        <end position="152"/>
    </location>
</feature>
<gene>
    <name evidence="1" type="primary">smpB</name>
    <name type="ordered locus">RBE_0739</name>
</gene>
<protein>
    <recommendedName>
        <fullName evidence="1">SsrA-binding protein</fullName>
    </recommendedName>
    <alternativeName>
        <fullName evidence="1">Small protein B</fullName>
    </alternativeName>
</protein>
<accession>Q1RIJ4</accession>
<keyword id="KW-0963">Cytoplasm</keyword>
<keyword id="KW-0694">RNA-binding</keyword>
<evidence type="ECO:0000255" key="1">
    <source>
        <dbReference type="HAMAP-Rule" id="MF_00023"/>
    </source>
</evidence>
<sequence>MMEYKKIIAQNKKALFNYFIEERLEAGIVLKGSEVQSLRQGKASIEESHAADTGNEVFLYNCHIAEYEKANRFNHSTRRPRKLLLHKKEINKIIGRTKIKGYTLVALSMYFNKKNKIKIELGIAKGKKLHDKRESIKEKDWKRDQSRLIRQK</sequence>
<proteinExistence type="inferred from homology"/>
<name>SSRP_RICBR</name>
<dbReference type="EMBL" id="CP000087">
    <property type="protein sequence ID" value="ABE04820.1"/>
    <property type="molecule type" value="Genomic_DNA"/>
</dbReference>
<dbReference type="RefSeq" id="WP_011477407.1">
    <property type="nucleotide sequence ID" value="NC_007940.1"/>
</dbReference>
<dbReference type="SMR" id="Q1RIJ4"/>
<dbReference type="KEGG" id="rbe:RBE_0739"/>
<dbReference type="eggNOG" id="COG0691">
    <property type="taxonomic scope" value="Bacteria"/>
</dbReference>
<dbReference type="HOGENOM" id="CLU_108953_0_1_5"/>
<dbReference type="OrthoDB" id="9805462at2"/>
<dbReference type="Proteomes" id="UP000001951">
    <property type="component" value="Chromosome"/>
</dbReference>
<dbReference type="GO" id="GO:0005829">
    <property type="term" value="C:cytosol"/>
    <property type="evidence" value="ECO:0007669"/>
    <property type="project" value="TreeGrafter"/>
</dbReference>
<dbReference type="GO" id="GO:0003723">
    <property type="term" value="F:RNA binding"/>
    <property type="evidence" value="ECO:0007669"/>
    <property type="project" value="UniProtKB-UniRule"/>
</dbReference>
<dbReference type="GO" id="GO:0070929">
    <property type="term" value="P:trans-translation"/>
    <property type="evidence" value="ECO:0007669"/>
    <property type="project" value="UniProtKB-UniRule"/>
</dbReference>
<dbReference type="CDD" id="cd09294">
    <property type="entry name" value="SmpB"/>
    <property type="match status" value="1"/>
</dbReference>
<dbReference type="Gene3D" id="2.40.280.10">
    <property type="match status" value="1"/>
</dbReference>
<dbReference type="HAMAP" id="MF_00023">
    <property type="entry name" value="SmpB"/>
    <property type="match status" value="1"/>
</dbReference>
<dbReference type="InterPro" id="IPR023620">
    <property type="entry name" value="SmpB"/>
</dbReference>
<dbReference type="InterPro" id="IPR000037">
    <property type="entry name" value="SsrA-bd_prot"/>
</dbReference>
<dbReference type="InterPro" id="IPR020081">
    <property type="entry name" value="SsrA-bd_prot_CS"/>
</dbReference>
<dbReference type="NCBIfam" id="NF003843">
    <property type="entry name" value="PRK05422.1"/>
    <property type="match status" value="1"/>
</dbReference>
<dbReference type="NCBIfam" id="TIGR00086">
    <property type="entry name" value="smpB"/>
    <property type="match status" value="1"/>
</dbReference>
<dbReference type="PANTHER" id="PTHR30308:SF2">
    <property type="entry name" value="SSRA-BINDING PROTEIN"/>
    <property type="match status" value="1"/>
</dbReference>
<dbReference type="PANTHER" id="PTHR30308">
    <property type="entry name" value="TMRNA-BINDING COMPONENT OF TRANS-TRANSLATION TAGGING COMPLEX"/>
    <property type="match status" value="1"/>
</dbReference>
<dbReference type="Pfam" id="PF01668">
    <property type="entry name" value="SmpB"/>
    <property type="match status" value="1"/>
</dbReference>
<dbReference type="SUPFAM" id="SSF74982">
    <property type="entry name" value="Small protein B (SmpB)"/>
    <property type="match status" value="1"/>
</dbReference>
<dbReference type="PROSITE" id="PS01317">
    <property type="entry name" value="SSRP"/>
    <property type="match status" value="1"/>
</dbReference>
<organism>
    <name type="scientific">Rickettsia bellii (strain RML369-C)</name>
    <dbReference type="NCBI Taxonomy" id="336407"/>
    <lineage>
        <taxon>Bacteria</taxon>
        <taxon>Pseudomonadati</taxon>
        <taxon>Pseudomonadota</taxon>
        <taxon>Alphaproteobacteria</taxon>
        <taxon>Rickettsiales</taxon>
        <taxon>Rickettsiaceae</taxon>
        <taxon>Rickettsieae</taxon>
        <taxon>Rickettsia</taxon>
        <taxon>belli group</taxon>
    </lineage>
</organism>
<reference key="1">
    <citation type="journal article" date="2006" name="PLoS Genet.">
        <title>Genome sequence of Rickettsia bellii illuminates the role of amoebae in gene exchanges between intracellular pathogens.</title>
        <authorList>
            <person name="Ogata H."/>
            <person name="La Scola B."/>
            <person name="Audic S."/>
            <person name="Renesto P."/>
            <person name="Blanc G."/>
            <person name="Robert C."/>
            <person name="Fournier P.-E."/>
            <person name="Claverie J.-M."/>
            <person name="Raoult D."/>
        </authorList>
    </citation>
    <scope>NUCLEOTIDE SEQUENCE [LARGE SCALE GENOMIC DNA]</scope>
    <source>
        <strain>RML369-C</strain>
    </source>
</reference>